<reference key="1">
    <citation type="journal article" date="2011" name="J. Bacteriol.">
        <title>Complete genome sequence of the plant growth-promoting endophyte Burkholderia phytofirmans strain PsJN.</title>
        <authorList>
            <person name="Weilharter A."/>
            <person name="Mitter B."/>
            <person name="Shin M.V."/>
            <person name="Chain P.S."/>
            <person name="Nowak J."/>
            <person name="Sessitsch A."/>
        </authorList>
    </citation>
    <scope>NUCLEOTIDE SEQUENCE [LARGE SCALE GENOMIC DNA]</scope>
    <source>
        <strain>DSM 17436 / LMG 22146 / PsJN</strain>
    </source>
</reference>
<dbReference type="EMBL" id="CP001052">
    <property type="protein sequence ID" value="ACD17308.1"/>
    <property type="molecule type" value="Genomic_DNA"/>
</dbReference>
<dbReference type="RefSeq" id="WP_006051932.1">
    <property type="nucleotide sequence ID" value="NC_010681.1"/>
</dbReference>
<dbReference type="SMR" id="B2T5U4"/>
<dbReference type="STRING" id="398527.Bphyt_2914"/>
<dbReference type="GeneID" id="98102466"/>
<dbReference type="KEGG" id="bpy:Bphyt_2914"/>
<dbReference type="eggNOG" id="COG0333">
    <property type="taxonomic scope" value="Bacteria"/>
</dbReference>
<dbReference type="HOGENOM" id="CLU_129084_2_1_4"/>
<dbReference type="OrthoDB" id="9801927at2"/>
<dbReference type="Proteomes" id="UP000001739">
    <property type="component" value="Chromosome 1"/>
</dbReference>
<dbReference type="GO" id="GO:0015934">
    <property type="term" value="C:large ribosomal subunit"/>
    <property type="evidence" value="ECO:0007669"/>
    <property type="project" value="InterPro"/>
</dbReference>
<dbReference type="GO" id="GO:0003735">
    <property type="term" value="F:structural constituent of ribosome"/>
    <property type="evidence" value="ECO:0007669"/>
    <property type="project" value="InterPro"/>
</dbReference>
<dbReference type="GO" id="GO:0006412">
    <property type="term" value="P:translation"/>
    <property type="evidence" value="ECO:0007669"/>
    <property type="project" value="UniProtKB-UniRule"/>
</dbReference>
<dbReference type="HAMAP" id="MF_00340">
    <property type="entry name" value="Ribosomal_bL32"/>
    <property type="match status" value="1"/>
</dbReference>
<dbReference type="InterPro" id="IPR002677">
    <property type="entry name" value="Ribosomal_bL32"/>
</dbReference>
<dbReference type="InterPro" id="IPR044957">
    <property type="entry name" value="Ribosomal_bL32_bact"/>
</dbReference>
<dbReference type="InterPro" id="IPR011332">
    <property type="entry name" value="Ribosomal_zn-bd"/>
</dbReference>
<dbReference type="NCBIfam" id="TIGR01031">
    <property type="entry name" value="rpmF_bact"/>
    <property type="match status" value="1"/>
</dbReference>
<dbReference type="PANTHER" id="PTHR35534">
    <property type="entry name" value="50S RIBOSOMAL PROTEIN L32"/>
    <property type="match status" value="1"/>
</dbReference>
<dbReference type="PANTHER" id="PTHR35534:SF1">
    <property type="entry name" value="LARGE RIBOSOMAL SUBUNIT PROTEIN BL32"/>
    <property type="match status" value="1"/>
</dbReference>
<dbReference type="Pfam" id="PF01783">
    <property type="entry name" value="Ribosomal_L32p"/>
    <property type="match status" value="1"/>
</dbReference>
<dbReference type="SUPFAM" id="SSF57829">
    <property type="entry name" value="Zn-binding ribosomal proteins"/>
    <property type="match status" value="1"/>
</dbReference>
<accession>B2T5U4</accession>
<protein>
    <recommendedName>
        <fullName evidence="1">Large ribosomal subunit protein bL32</fullName>
    </recommendedName>
    <alternativeName>
        <fullName evidence="3">50S ribosomal protein L32</fullName>
    </alternativeName>
</protein>
<gene>
    <name evidence="1" type="primary">rpmF</name>
    <name type="ordered locus">Bphyt_2914</name>
</gene>
<evidence type="ECO:0000255" key="1">
    <source>
        <dbReference type="HAMAP-Rule" id="MF_00340"/>
    </source>
</evidence>
<evidence type="ECO:0000256" key="2">
    <source>
        <dbReference type="SAM" id="MobiDB-lite"/>
    </source>
</evidence>
<evidence type="ECO:0000305" key="3"/>
<comment type="similarity">
    <text evidence="1">Belongs to the bacterial ribosomal protein bL32 family.</text>
</comment>
<keyword id="KW-0687">Ribonucleoprotein</keyword>
<keyword id="KW-0689">Ribosomal protein</keyword>
<name>RL32_PARPJ</name>
<proteinExistence type="inferred from homology"/>
<sequence>MAVQQNKKSPSKRGMHRSHDFLTAAPLAVEPSTGEVHLRHHVSPNGYYRGKKVVKTKND</sequence>
<feature type="chain" id="PRO_1000120101" description="Large ribosomal subunit protein bL32">
    <location>
        <begin position="1"/>
        <end position="59"/>
    </location>
</feature>
<feature type="region of interest" description="Disordered" evidence="2">
    <location>
        <begin position="1"/>
        <end position="23"/>
    </location>
</feature>
<feature type="region of interest" description="Disordered" evidence="2">
    <location>
        <begin position="35"/>
        <end position="59"/>
    </location>
</feature>
<feature type="compositionally biased region" description="Basic residues" evidence="2">
    <location>
        <begin position="49"/>
        <end position="59"/>
    </location>
</feature>
<organism>
    <name type="scientific">Paraburkholderia phytofirmans (strain DSM 17436 / LMG 22146 / PsJN)</name>
    <name type="common">Burkholderia phytofirmans</name>
    <dbReference type="NCBI Taxonomy" id="398527"/>
    <lineage>
        <taxon>Bacteria</taxon>
        <taxon>Pseudomonadati</taxon>
        <taxon>Pseudomonadota</taxon>
        <taxon>Betaproteobacteria</taxon>
        <taxon>Burkholderiales</taxon>
        <taxon>Burkholderiaceae</taxon>
        <taxon>Paraburkholderia</taxon>
    </lineage>
</organism>